<evidence type="ECO:0000250" key="1">
    <source>
        <dbReference type="UniProtKB" id="Q2FZP8"/>
    </source>
</evidence>
<evidence type="ECO:0000255" key="2"/>
<evidence type="ECO:0000305" key="3"/>
<protein>
    <recommendedName>
        <fullName evidence="1">Proton-coupled antiporter flippase LtaA</fullName>
    </recommendedName>
    <alternativeName>
        <fullName evidence="1">Lipoteichoic acid protein A</fullName>
    </alternativeName>
</protein>
<name>LTAA_STAA3</name>
<proteinExistence type="inferred from homology"/>
<comment type="function">
    <text evidence="1">Proton-coupled antiporter flippase that catalyzes the translocation, from the inner to the outer leaflet of the cell membrane, of the lipid-linked disaccharide (anchor-LLD) that anchors lipoteichoic acids (LTA) to the cell membrane.</text>
</comment>
<comment type="pathway">
    <text evidence="1">Cell wall biogenesis; lipoteichoic acid biosynthesis.</text>
</comment>
<comment type="subcellular location">
    <subcellularLocation>
        <location evidence="1">Cell membrane</location>
        <topology evidence="1">Multi-pass membrane protein</topology>
    </subcellularLocation>
</comment>
<comment type="similarity">
    <text evidence="3">Belongs to the major facilitator superfamily. LtaA family.</text>
</comment>
<comment type="sequence caution" evidence="3">
    <conflict type="erroneous initiation">
        <sequence resource="EMBL-CDS" id="ABD20933"/>
    </conflict>
</comment>
<feature type="chain" id="PRO_0000287160" description="Proton-coupled antiporter flippase LtaA">
    <location>
        <begin position="1"/>
        <end position="396"/>
    </location>
</feature>
<feature type="transmembrane region" description="Helical" evidence="2">
    <location>
        <begin position="15"/>
        <end position="34"/>
    </location>
</feature>
<feature type="transmembrane region" description="Helical" evidence="2">
    <location>
        <begin position="46"/>
        <end position="73"/>
    </location>
</feature>
<feature type="transmembrane region" description="Helical" evidence="2">
    <location>
        <begin position="80"/>
        <end position="99"/>
    </location>
</feature>
<feature type="transmembrane region" description="Helical" evidence="2">
    <location>
        <begin position="105"/>
        <end position="126"/>
    </location>
</feature>
<feature type="transmembrane region" description="Helical" evidence="2">
    <location>
        <begin position="138"/>
        <end position="159"/>
    </location>
</feature>
<feature type="transmembrane region" description="Helical" evidence="2">
    <location>
        <begin position="165"/>
        <end position="184"/>
    </location>
</feature>
<feature type="transmembrane region" description="Helical" evidence="2">
    <location>
        <begin position="211"/>
        <end position="231"/>
    </location>
</feature>
<feature type="transmembrane region" description="Helical" evidence="2">
    <location>
        <begin position="243"/>
        <end position="263"/>
    </location>
</feature>
<feature type="transmembrane region" description="Helical" evidence="2">
    <location>
        <begin position="275"/>
        <end position="297"/>
    </location>
</feature>
<feature type="transmembrane region" description="Helical" evidence="2">
    <location>
        <begin position="303"/>
        <end position="326"/>
    </location>
</feature>
<feature type="transmembrane region" description="Helical" evidence="2">
    <location>
        <begin position="338"/>
        <end position="358"/>
    </location>
</feature>
<feature type="transmembrane region" description="Helical" evidence="2">
    <location>
        <begin position="370"/>
        <end position="390"/>
    </location>
</feature>
<reference key="1">
    <citation type="journal article" date="2006" name="Lancet">
        <title>Complete genome sequence of USA300, an epidemic clone of community-acquired meticillin-resistant Staphylococcus aureus.</title>
        <authorList>
            <person name="Diep B.A."/>
            <person name="Gill S.R."/>
            <person name="Chang R.F."/>
            <person name="Phan T.H."/>
            <person name="Chen J.H."/>
            <person name="Davidson M.G."/>
            <person name="Lin F."/>
            <person name="Lin J."/>
            <person name="Carleton H.A."/>
            <person name="Mongodin E.F."/>
            <person name="Sensabaugh G.F."/>
            <person name="Perdreau-Remington F."/>
        </authorList>
    </citation>
    <scope>NUCLEOTIDE SEQUENCE [LARGE SCALE GENOMIC DNA]</scope>
    <source>
        <strain>USA300</strain>
    </source>
</reference>
<sequence>MQDSSLNNYANHKNFILMLIILFLMEFARGMYILSYINFLPTVTSIAVAITSLAFSIHFIADASTNFVIGFLLKKFGTKIVLTTGFILAFTSLFLVIWFPASPFVIIFSAMMLGIAVSPIWVIMLSSVEEDKRGKQMGYVYFSWLLGLLVGMVFMNLLIKVHPTRFAFMMSLVVLIAWILYYFVDVKLTNYNTRPVKAQLRQIVDVTKRHLLLFPGILLQGAAIAALVPILPTYATKVINVSTIEYTVAIIIGGIGCAVSMLFLSKLIDNRSRNFMYGVILSGFILYMILIFTLSMIVNIHILWIIALAIGLMYGILLPAWNTFMARFIKSDEQEETWGVFNSIQGFGSMIGPLFGGLITQFTNNLNNTFYFSALIFLVLAVFYGSYFIVNREKAK</sequence>
<dbReference type="EMBL" id="CP000255">
    <property type="protein sequence ID" value="ABD20933.1"/>
    <property type="status" value="ALT_INIT"/>
    <property type="molecule type" value="Genomic_DNA"/>
</dbReference>
<dbReference type="RefSeq" id="WP_001154222.1">
    <property type="nucleotide sequence ID" value="NZ_CP027476.1"/>
</dbReference>
<dbReference type="SMR" id="Q2FI61"/>
<dbReference type="KEGG" id="saa:SAUSA300_0917"/>
<dbReference type="HOGENOM" id="CLU_054518_0_0_9"/>
<dbReference type="OMA" id="GYVYFAW"/>
<dbReference type="UniPathway" id="UPA00556"/>
<dbReference type="Proteomes" id="UP000001939">
    <property type="component" value="Chromosome"/>
</dbReference>
<dbReference type="GO" id="GO:0005886">
    <property type="term" value="C:plasma membrane"/>
    <property type="evidence" value="ECO:0007669"/>
    <property type="project" value="UniProtKB-SubCell"/>
</dbReference>
<dbReference type="GO" id="GO:0015297">
    <property type="term" value="F:antiporter activity"/>
    <property type="evidence" value="ECO:0007669"/>
    <property type="project" value="UniProtKB-KW"/>
</dbReference>
<dbReference type="GO" id="GO:0006869">
    <property type="term" value="P:lipid transport"/>
    <property type="evidence" value="ECO:0007669"/>
    <property type="project" value="UniProtKB-KW"/>
</dbReference>
<dbReference type="GO" id="GO:0070395">
    <property type="term" value="P:lipoteichoic acid biosynthetic process"/>
    <property type="evidence" value="ECO:0007669"/>
    <property type="project" value="UniProtKB-UniPathway"/>
</dbReference>
<dbReference type="CDD" id="cd17325">
    <property type="entry name" value="MFS_MdtG_SLC18_like"/>
    <property type="match status" value="1"/>
</dbReference>
<dbReference type="Gene3D" id="1.20.1250.20">
    <property type="entry name" value="MFS general substrate transporter like domains"/>
    <property type="match status" value="2"/>
</dbReference>
<dbReference type="InterPro" id="IPR050495">
    <property type="entry name" value="ATG22/LtaA_families"/>
</dbReference>
<dbReference type="InterPro" id="IPR011701">
    <property type="entry name" value="MFS"/>
</dbReference>
<dbReference type="InterPro" id="IPR020846">
    <property type="entry name" value="MFS_dom"/>
</dbReference>
<dbReference type="InterPro" id="IPR036259">
    <property type="entry name" value="MFS_trans_sf"/>
</dbReference>
<dbReference type="NCBIfam" id="NF047396">
    <property type="entry name" value="MFS_flip_LtaA"/>
    <property type="match status" value="1"/>
</dbReference>
<dbReference type="PANTHER" id="PTHR23519">
    <property type="entry name" value="AUTOPHAGY-RELATED PROTEIN 22"/>
    <property type="match status" value="1"/>
</dbReference>
<dbReference type="PANTHER" id="PTHR23519:SF1">
    <property type="entry name" value="AUTOPHAGY-RELATED PROTEIN 22"/>
    <property type="match status" value="1"/>
</dbReference>
<dbReference type="Pfam" id="PF07690">
    <property type="entry name" value="MFS_1"/>
    <property type="match status" value="1"/>
</dbReference>
<dbReference type="SUPFAM" id="SSF103473">
    <property type="entry name" value="MFS general substrate transporter"/>
    <property type="match status" value="1"/>
</dbReference>
<dbReference type="PROSITE" id="PS50850">
    <property type="entry name" value="MFS"/>
    <property type="match status" value="1"/>
</dbReference>
<keyword id="KW-0050">Antiport</keyword>
<keyword id="KW-1003">Cell membrane</keyword>
<keyword id="KW-0445">Lipid transport</keyword>
<keyword id="KW-0472">Membrane</keyword>
<keyword id="KW-0812">Transmembrane</keyword>
<keyword id="KW-1133">Transmembrane helix</keyword>
<keyword id="KW-0813">Transport</keyword>
<keyword id="KW-0843">Virulence</keyword>
<gene>
    <name type="primary">ltaA</name>
    <name type="ordered locus">SAUSA300_0917</name>
</gene>
<accession>Q2FI61</accession>
<organism>
    <name type="scientific">Staphylococcus aureus (strain USA300)</name>
    <dbReference type="NCBI Taxonomy" id="367830"/>
    <lineage>
        <taxon>Bacteria</taxon>
        <taxon>Bacillati</taxon>
        <taxon>Bacillota</taxon>
        <taxon>Bacilli</taxon>
        <taxon>Bacillales</taxon>
        <taxon>Staphylococcaceae</taxon>
        <taxon>Staphylococcus</taxon>
    </lineage>
</organism>